<keyword id="KW-0010">Activator</keyword>
<keyword id="KW-0090">Biological rhythms</keyword>
<keyword id="KW-0963">Cytoplasm</keyword>
<keyword id="KW-0227">DNA damage</keyword>
<keyword id="KW-0238">DNA-binding</keyword>
<keyword id="KW-1017">Isopeptide bond</keyword>
<keyword id="KW-0539">Nucleus</keyword>
<keyword id="KW-0597">Phosphoprotein</keyword>
<keyword id="KW-0677">Repeat</keyword>
<keyword id="KW-0804">Transcription</keyword>
<keyword id="KW-0805">Transcription regulation</keyword>
<keyword id="KW-0808">Transferase</keyword>
<keyword id="KW-0832">Ubl conjugation</keyword>
<dbReference type="EC" id="2.3.1.48"/>
<dbReference type="EMBL" id="AJ318058">
    <property type="protein sequence ID" value="CAC85404.1"/>
    <property type="molecule type" value="mRNA"/>
</dbReference>
<dbReference type="SMR" id="Q91YB2"/>
<dbReference type="GO" id="GO:0033391">
    <property type="term" value="C:chromatoid body"/>
    <property type="evidence" value="ECO:0000250"/>
    <property type="project" value="UniProtKB"/>
</dbReference>
<dbReference type="GO" id="GO:1990513">
    <property type="term" value="C:CLOCK-BMAL transcription complex"/>
    <property type="evidence" value="ECO:0007669"/>
    <property type="project" value="TreeGrafter"/>
</dbReference>
<dbReference type="GO" id="GO:0005829">
    <property type="term" value="C:cytosol"/>
    <property type="evidence" value="ECO:0000250"/>
    <property type="project" value="UniProtKB"/>
</dbReference>
<dbReference type="GO" id="GO:0005634">
    <property type="term" value="C:nucleus"/>
    <property type="evidence" value="ECO:0000250"/>
    <property type="project" value="UniProtKB"/>
</dbReference>
<dbReference type="GO" id="GO:0005667">
    <property type="term" value="C:transcription regulator complex"/>
    <property type="evidence" value="ECO:0000250"/>
    <property type="project" value="UniProtKB"/>
</dbReference>
<dbReference type="GO" id="GO:0003677">
    <property type="term" value="F:DNA binding"/>
    <property type="evidence" value="ECO:0000250"/>
    <property type="project" value="UniProtKB"/>
</dbReference>
<dbReference type="GO" id="GO:0003700">
    <property type="term" value="F:DNA-binding transcription factor activity"/>
    <property type="evidence" value="ECO:0000250"/>
    <property type="project" value="UniProtKB"/>
</dbReference>
<dbReference type="GO" id="GO:0000981">
    <property type="term" value="F:DNA-binding transcription factor activity, RNA polymerase II-specific"/>
    <property type="evidence" value="ECO:0007669"/>
    <property type="project" value="InterPro"/>
</dbReference>
<dbReference type="GO" id="GO:0070888">
    <property type="term" value="F:E-box binding"/>
    <property type="evidence" value="ECO:0000250"/>
    <property type="project" value="UniProtKB"/>
</dbReference>
<dbReference type="GO" id="GO:0004402">
    <property type="term" value="F:histone acetyltransferase activity"/>
    <property type="evidence" value="ECO:0000250"/>
    <property type="project" value="UniProtKB"/>
</dbReference>
<dbReference type="GO" id="GO:0046983">
    <property type="term" value="F:protein dimerization activity"/>
    <property type="evidence" value="ECO:0007669"/>
    <property type="project" value="InterPro"/>
</dbReference>
<dbReference type="GO" id="GO:0000978">
    <property type="term" value="F:RNA polymerase II cis-regulatory region sequence-specific DNA binding"/>
    <property type="evidence" value="ECO:0000250"/>
    <property type="project" value="UniProtKB"/>
</dbReference>
<dbReference type="GO" id="GO:0032922">
    <property type="term" value="P:circadian regulation of gene expression"/>
    <property type="evidence" value="ECO:0000250"/>
    <property type="project" value="UniProtKB"/>
</dbReference>
<dbReference type="GO" id="GO:0006974">
    <property type="term" value="P:DNA damage response"/>
    <property type="evidence" value="ECO:0007669"/>
    <property type="project" value="UniProtKB-KW"/>
</dbReference>
<dbReference type="GO" id="GO:0045893">
    <property type="term" value="P:positive regulation of DNA-templated transcription"/>
    <property type="evidence" value="ECO:0000250"/>
    <property type="project" value="UniProtKB"/>
</dbReference>
<dbReference type="GO" id="GO:0051092">
    <property type="term" value="P:positive regulation of NF-kappaB transcription factor activity"/>
    <property type="evidence" value="ECO:0000250"/>
    <property type="project" value="UniProtKB"/>
</dbReference>
<dbReference type="GO" id="GO:0043161">
    <property type="term" value="P:proteasome-mediated ubiquitin-dependent protein catabolic process"/>
    <property type="evidence" value="ECO:0000250"/>
    <property type="project" value="UniProtKB"/>
</dbReference>
<dbReference type="GO" id="GO:0006473">
    <property type="term" value="P:protein acetylation"/>
    <property type="evidence" value="ECO:0000250"/>
    <property type="project" value="UniProtKB"/>
</dbReference>
<dbReference type="GO" id="GO:0042752">
    <property type="term" value="P:regulation of circadian rhythm"/>
    <property type="evidence" value="ECO:0000250"/>
    <property type="project" value="UniProtKB"/>
</dbReference>
<dbReference type="GO" id="GO:0006355">
    <property type="term" value="P:regulation of DNA-templated transcription"/>
    <property type="evidence" value="ECO:0000250"/>
    <property type="project" value="UniProtKB"/>
</dbReference>
<dbReference type="GO" id="GO:0042634">
    <property type="term" value="P:regulation of hair cycle"/>
    <property type="evidence" value="ECO:0000250"/>
    <property type="project" value="UniProtKB"/>
</dbReference>
<dbReference type="GO" id="GO:0050796">
    <property type="term" value="P:regulation of insulin secretion"/>
    <property type="evidence" value="ECO:0000250"/>
    <property type="project" value="UniProtKB"/>
</dbReference>
<dbReference type="GO" id="GO:2000074">
    <property type="term" value="P:regulation of type B pancreatic cell development"/>
    <property type="evidence" value="ECO:0000250"/>
    <property type="project" value="UniProtKB"/>
</dbReference>
<dbReference type="GO" id="GO:0051775">
    <property type="term" value="P:response to redox state"/>
    <property type="evidence" value="ECO:0000250"/>
    <property type="project" value="UniProtKB"/>
</dbReference>
<dbReference type="GO" id="GO:0007283">
    <property type="term" value="P:spermatogenesis"/>
    <property type="evidence" value="ECO:0000250"/>
    <property type="project" value="UniProtKB"/>
</dbReference>
<dbReference type="CDD" id="cd19734">
    <property type="entry name" value="bHLH-PAS_CLOCK"/>
    <property type="match status" value="1"/>
</dbReference>
<dbReference type="CDD" id="cd00130">
    <property type="entry name" value="PAS"/>
    <property type="match status" value="2"/>
</dbReference>
<dbReference type="FunFam" id="3.30.450.20:FF:000016">
    <property type="entry name" value="Circadian locomoter output cycles protein"/>
    <property type="match status" value="1"/>
</dbReference>
<dbReference type="FunFam" id="4.10.280.10:FF:000013">
    <property type="entry name" value="Circadian locomoter output cycles protein kaput"/>
    <property type="match status" value="1"/>
</dbReference>
<dbReference type="FunFam" id="3.30.450.20:FF:000022">
    <property type="entry name" value="circadian locomoter output cycles protein kaput"/>
    <property type="match status" value="1"/>
</dbReference>
<dbReference type="Gene3D" id="4.10.280.10">
    <property type="entry name" value="Helix-loop-helix DNA-binding domain"/>
    <property type="match status" value="1"/>
</dbReference>
<dbReference type="Gene3D" id="3.30.450.20">
    <property type="entry name" value="PAS domain"/>
    <property type="match status" value="2"/>
</dbReference>
<dbReference type="InterPro" id="IPR011598">
    <property type="entry name" value="bHLH_dom"/>
</dbReference>
<dbReference type="InterPro" id="IPR047230">
    <property type="entry name" value="CLOCK-like"/>
</dbReference>
<dbReference type="InterPro" id="IPR036638">
    <property type="entry name" value="HLH_DNA-bd_sf"/>
</dbReference>
<dbReference type="InterPro" id="IPR001067">
    <property type="entry name" value="Nuc_translocat"/>
</dbReference>
<dbReference type="InterPro" id="IPR001610">
    <property type="entry name" value="PAC"/>
</dbReference>
<dbReference type="InterPro" id="IPR000014">
    <property type="entry name" value="PAS"/>
</dbReference>
<dbReference type="InterPro" id="IPR035965">
    <property type="entry name" value="PAS-like_dom_sf"/>
</dbReference>
<dbReference type="InterPro" id="IPR013767">
    <property type="entry name" value="PAS_fold"/>
</dbReference>
<dbReference type="PANTHER" id="PTHR46055">
    <property type="entry name" value="CIRCADIAN LOCOMOTER OUTPUT CYCLES PROTEIN KAPUT"/>
    <property type="match status" value="1"/>
</dbReference>
<dbReference type="PANTHER" id="PTHR46055:SF2">
    <property type="entry name" value="CIRCADIAN LOCOMOTER OUTPUT CYCLES PROTEIN KAPUT"/>
    <property type="match status" value="1"/>
</dbReference>
<dbReference type="Pfam" id="PF00010">
    <property type="entry name" value="HLH"/>
    <property type="match status" value="1"/>
</dbReference>
<dbReference type="Pfam" id="PF00989">
    <property type="entry name" value="PAS"/>
    <property type="match status" value="1"/>
</dbReference>
<dbReference type="Pfam" id="PF14598">
    <property type="entry name" value="PAS_11"/>
    <property type="match status" value="1"/>
</dbReference>
<dbReference type="PRINTS" id="PR00785">
    <property type="entry name" value="NCTRNSLOCATR"/>
</dbReference>
<dbReference type="SMART" id="SM00353">
    <property type="entry name" value="HLH"/>
    <property type="match status" value="1"/>
</dbReference>
<dbReference type="SMART" id="SM00086">
    <property type="entry name" value="PAC"/>
    <property type="match status" value="1"/>
</dbReference>
<dbReference type="SMART" id="SM00091">
    <property type="entry name" value="PAS"/>
    <property type="match status" value="2"/>
</dbReference>
<dbReference type="SUPFAM" id="SSF47459">
    <property type="entry name" value="HLH, helix-loop-helix DNA-binding domain"/>
    <property type="match status" value="1"/>
</dbReference>
<dbReference type="SUPFAM" id="SSF55785">
    <property type="entry name" value="PYP-like sensor domain (PAS domain)"/>
    <property type="match status" value="2"/>
</dbReference>
<dbReference type="PROSITE" id="PS50888">
    <property type="entry name" value="BHLH"/>
    <property type="match status" value="1"/>
</dbReference>
<dbReference type="PROSITE" id="PS50112">
    <property type="entry name" value="PAS"/>
    <property type="match status" value="2"/>
</dbReference>
<comment type="function">
    <text evidence="2 3">Transcriptional activator which forms a core component of the circadian clock. The circadian clock, an internal time-keeping system, regulates various physiological processes through the generation of approximately 24 hour circadian rhythms in gene expression, which are translated into rhythms in metabolism and behavior. It is derived from the Latin roots 'circa' (about) and 'diem' (day) and acts as an important regulator of a wide array of physiological functions including metabolism, sleep, body temperature, blood pressure, endocrine, immune, cardiovascular, and renal function. Consists of two major components: the central clock, residing in the suprachiasmatic nucleus (SCN) of the brain, and the peripheral clocks that are present in nearly every tissue and organ system. Both the central and peripheral clocks can be reset by environmental cues, also known as Zeitgebers (German for 'timegivers'). The predominant Zeitgeber for the central clock is light, which is sensed by retina and signals directly to the SCN. The central clock entrains the peripheral clocks through neuronal and hormonal signals, body temperature and feeding-related cues, aligning all clocks with the external light/dark cycle. Circadian rhythms allow an organism to achieve temporal homeostasis with its environment at the molecular level by regulating gene expression to create a peak of protein expression once every 24 hours to control when a particular physiological process is most active with respect to the solar day. Transcription and translation of core clock components (CLOCK, NPAS2, BMAL1, BMAL2, PER1, PER2, PER3, CRY1 and CRY2) plays a critical role in rhythm generation, whereas delays imposed by post-translational modifications (PTMs) are important for determining the period (tau) of the rhythms (tau refers to the period of a rhythm and is the length, in time, of one complete cycle). A diurnal rhythm is synchronized with the day/night cycle, while the ultradian and infradian rhythms have a period shorter and longer than 24 hours, respectively. Disruptions in the circadian rhythms contribute to the pathology of cardiovascular diseases, cancer, metabolic syndromes and aging. A transcription/translation feedback loop (TTFL) forms the core of the molecular circadian clock mechanism. Transcription factors, CLOCK or NPAS2 and BMAL1 or BMAL2, form the positive limb of the feedback loop, act in the form of a heterodimer and activate the transcription of core clock genes and clock-controlled genes (involved in key metabolic processes), harboring E-box elements (5'-CACGTG-3') within their promoters. The core clock genes: PER1/2/3 and CRY1/2 which are transcriptional repressors form the negative limb of the feedback loop and interact with the CLOCK|NPAS2-BMAL1|BMAL2 heterodimer inhibiting its activity and thereby negatively regulating their own expression. This heterodimer also activates nuclear receptors NR1D1/2 and RORA/B/G, which form a second feedback loop and which activate and repress BMAL1 transcription, respectively. Regulates the circadian expression of ICAM1, VCAM1, CCL2, THPO and MPL and also acts as an enhancer of the transactivation potential of NF-kappaB. Plays an important role in the homeostatic regulation of sleep. The CLOCK-BMAL1 heterodimer regulates the circadian expression of SERPINE1/PAI1, VWF, B3, CCRN4L/NOC, NAMPT, DBP, MYOD1, PPARGC1A, PPARGC1B, SIRT1, GYS2, F7, NGFR, GNRHR, BHLHE40/DEC1, ATF4, MTA1, KLF10 and also genes implicated in glucose and lipid metabolism. Promotes rhythmic chromatin opening, regulating the DNA accessibility of other transcription factors. The CLOCK-BMAL2 heterodimer activates the transcription of SERPINE1/PAI1 and BHLHE40/DEC1. The preferred binding motif for the CLOCK-BMAL1 heterodimer is 5'-CACGTGA-3', which contains a flanking adenine nucleotide at the 3-prime end of the canonical 6-nucleotide E-box sequence. CLOCK specifically binds to the half-site 5'-CAC-3', while BMAL1 binds to the half-site 5'-GTGA-3'. The CLOCK-BMAL1 heterodimer also recognizes the non-canonical E-box motifs 5'-AACGTGA-3' and 5'-CATGTGA-3'. CLOCK has an intrinsic acetyltransferase activity, which enables circadian chromatin remodeling by acetylating histones and nonhistone proteins, including its own partner BMAL1. Represses glucocorticoid receptor NR3C1/GR-induced transcriptional activity by reducing the association of NR3C1/GR to glucocorticoid response elements (GREs) via the acetylation of multiple lysine residues located in its hinge region. The acetyltransferase activity of CLOCK is as important as its transcription activity in circadian control. Acetylates metabolic enzymes IMPDH2 and NDUFA9 in a circadian manner. Facilitated by BMAL1, rhythmically interacts and acetylates argininosuccinate synthase 1 (ASS1) leading to enzymatic inhibition of ASS1 as well as the circadian oscillation of arginine biosynthesis and subsequent ureagenesis (By similarity). Drives the circadian rhythm of blood pressure through transcriptional activation of ATP1B1 (By similarity).</text>
</comment>
<comment type="catalytic activity">
    <reaction>
        <text>L-lysyl-[protein] + acetyl-CoA = N(6)-acetyl-L-lysyl-[protein] + CoA + H(+)</text>
        <dbReference type="Rhea" id="RHEA:45948"/>
        <dbReference type="Rhea" id="RHEA-COMP:9752"/>
        <dbReference type="Rhea" id="RHEA-COMP:10731"/>
        <dbReference type="ChEBI" id="CHEBI:15378"/>
        <dbReference type="ChEBI" id="CHEBI:29969"/>
        <dbReference type="ChEBI" id="CHEBI:57287"/>
        <dbReference type="ChEBI" id="CHEBI:57288"/>
        <dbReference type="ChEBI" id="CHEBI:61930"/>
        <dbReference type="EC" id="2.3.1.48"/>
    </reaction>
</comment>
<comment type="subunit">
    <text evidence="2 3">Component of the circadian clock oscillator which includes the CRY proteins, CLOCK or NPAS2, BMAL1 or BMAL2, CSNK1D and/or CSNK1E, TIMELESS and the PER proteins (By similarity). Forms a heterodimer with BMAL1 (By similarity). The CLOCK-BMAL1 heterodimer is required for E-box-dependent transactivation, for CLOCK nuclear translocation and degradation, and for phosphorylation of both CLOCK and BMAL1 (By similarity). Interacts with NR3C1 in a ligand-dependent fashion (By similarity). Interacts with ESR1 and estrogen stimulates this interaction (By similarity). Interacts with the complex p35/CDK5 (By similarity). Interacts with RELA/p65 (By similarity). Interacts with KAT2B, CREBBP and EP300 (By similarity). Interacts with ID1 and ID3 (By similarity). Interacts with ID2 (By similarity). Interacts with MTA1 (By similarity). Interacts with OGA (By similarity). Interacts with SIRT1 (By similarity). Interacts with CIPC (By similarity). Interacts with EZH2 (By similarity). Interacts with EIF4E, PIWIL1 and DDX4 (By similarity). Interacts with PER1, PER2, CRY1 and CRY2 and this interaction requires a translocation to the nucleus (By similarity). Interaction of the CLOCK-BMAL1 heterodimer with PER or CRY inhibits transcription activation (By similarity). Interaction of the CLOCK-BMAL1 with CRY1 is independent of DNA but with PER2 is off DNA (By similarity). The CLOCK-BMAL1 heterodimer interacts with GSK3B (By similarity). Interacts with KDM5A (By similarity). Interacts with KMT2A; in a circadian manner (By similarity). Interacts with MYBBP1A (By similarity). Interacts with THRAP3 (By similarity). Interacts with MED1; this interaction requires the presence of THRAP3 (By similarity). Interacts with NCOA2 (By similarity). The CLOCK-BMAL1 heterodimer interacts with PASD1. Interacts with ASS1 and IMPDH2; in a circadian manner. Interacts with NDUFA9 (By similarity). Interacts with PIWIL2 (via PIWI domain) (By similarity). Interacts with HNF4A (By similarity).</text>
</comment>
<comment type="subcellular location">
    <subcellularLocation>
        <location evidence="2">Cytoplasm</location>
    </subcellularLocation>
    <subcellularLocation>
        <location evidence="5">Nucleus</location>
    </subcellularLocation>
    <subcellularLocation>
        <location evidence="3">Cytoplasm</location>
        <location evidence="3">Cytosol</location>
    </subcellularLocation>
    <text evidence="2 3">Localizes to sites of DNA damage in a H2AX-independent manner. Shuttling between the cytoplasm and the nucleus is under circadian regulation and is BMAL1-dependent. Phosphorylated form located in the nucleus while the nonphosphorylated form found only in the cytoplasm. Sequestered to the cytoplasm in the presence of ID2.</text>
</comment>
<comment type="PTM">
    <text evidence="2">Ubiquitinated, leading to its proteasomal degradation.</text>
</comment>
<comment type="PTM">
    <text evidence="2">O-glycosylated; contains O-GlcNAc. O-glycosylation by OGT prevents protein degradation by inhibiting ubiquitination. It also stabilizes the CLOCK-BMAL1 heterodimer thereby increasing CLOCK-BMAL1-mediated transcriptional activation of PER1/2/3 and CRY1/2.</text>
</comment>
<comment type="PTM">
    <text evidence="2">Phosphorylation is dependent on the CLOCK-BMAL1 heterodimer formation. Phosphorylation enhances the transcriptional activity, alters the subcellular localization and decreases the stability of the heterodimer by promoting its degradation.</text>
</comment>
<comment type="PTM">
    <text evidence="2">Sumoylation enhances its transcriptional activity and interaction with ESR1, resulting in up-regulation of ESR1 activity. Estrogen stimulates sumoylation. Desumoylation by SENP1 negatively regulates its transcriptional activity.</text>
</comment>
<comment type="PTM">
    <text evidence="2">Undergoes lysosome-mediated degradation in a time-dependent manner in the liver.</text>
</comment>
<sequence>MVFTVSCSKMSSIVDRDDSSIFDGLVEEDDKDKAKRVSRNKSEKKRRDQFNVLIKELGSMLPGNARKMDKSTVLQKSIDFLRKHKEITAQSDASEIRQDWKPTFLSNEEFTQLMLEALDGFFLAIMTDGSIIYVSESVTSLLEHLPSDLVDQSVFNFIPEGEHSEVYKILSTHLLESDSLTPEYLKSKNQLEFCCHMLRGTIDPKEPSTYEYVRFIGNFKSLNSVPTSAHNGFEGTIQRTHRPSYEDRVCFVATVRLATPQFIKEMCTVEEPNEEFTSRHSLEWKFLFLDHRAPPIIGYLPFEVLGTSGYDYYHVDDLENLAKCHEHLMQYGKGKSCYYRFLTKGQQWIWLQTHYYITYHQWNSRPEFIVCTHTVVSYAEVRAERRRELGIEESLPDAAADKSQDSGSDNRINTVSLKEALERFDHSPTPSASSRSSRKSSHTAVSDPSSTPTKIPTDTSTPPRQHLPAHEKMAQRRSSFSSQSMNSQSVGPSLTQPVISQAANLPVPQGMSQFQFSAQLGAMQHLKDQLEQRTRMIEANIHRQQEELRKIQEQLQMVHGQGLQMFLQQSNPGLNFGSVQLSSGNSSNIQQLTPINMQGQVVPTNQIQSGMNAGHIGTSQHLIQQQSLQSTSTQQSQQSVMSGHSQQTSLASQTQSTLTAPLYNTMVISQPAPGSMVQIPSSMPQNSTQSATVTTFTQDRQIRFSQGQQLVTKLVTAPVACGAVMVPSTMLMGQVVTAYPTFATQQQQAQTLSVTQQQPQQQQPQQQQPQQQQPQQQQQSSQEQQLPSVPQPSQAQLTQSPQQFLQTSRLLHGNPSTQLILSAAFPLQQSTFPPSHHQQHQSQQQQQLSRHRTDSLTDPSKVQPQ</sequence>
<organism>
    <name type="scientific">Spalax carmeli</name>
    <name type="common">Southern Israeli blind subterranean mole rat</name>
    <dbReference type="NCBI Taxonomy" id="164324"/>
    <lineage>
        <taxon>Eukaryota</taxon>
        <taxon>Metazoa</taxon>
        <taxon>Chordata</taxon>
        <taxon>Craniata</taxon>
        <taxon>Vertebrata</taxon>
        <taxon>Euteleostomi</taxon>
        <taxon>Mammalia</taxon>
        <taxon>Eutheria</taxon>
        <taxon>Euarchontoglires</taxon>
        <taxon>Glires</taxon>
        <taxon>Rodentia</taxon>
        <taxon>Myomorpha</taxon>
        <taxon>Muroidea</taxon>
        <taxon>Spalacidae</taxon>
        <taxon>Spalacinae</taxon>
        <taxon>Spalax</taxon>
    </lineage>
</organism>
<gene>
    <name type="primary">Clock</name>
</gene>
<evidence type="ECO:0000250" key="1"/>
<evidence type="ECO:0000250" key="2">
    <source>
        <dbReference type="UniProtKB" id="O08785"/>
    </source>
</evidence>
<evidence type="ECO:0000250" key="3">
    <source>
        <dbReference type="UniProtKB" id="O15516"/>
    </source>
</evidence>
<evidence type="ECO:0000255" key="4">
    <source>
        <dbReference type="PROSITE-ProRule" id="PRU00140"/>
    </source>
</evidence>
<evidence type="ECO:0000255" key="5">
    <source>
        <dbReference type="PROSITE-ProRule" id="PRU00981"/>
    </source>
</evidence>
<evidence type="ECO:0000256" key="6">
    <source>
        <dbReference type="SAM" id="MobiDB-lite"/>
    </source>
</evidence>
<feature type="chain" id="PRO_0000262639" description="Circadian locomoter output cycles protein kaput">
    <location>
        <begin position="1"/>
        <end position="865"/>
    </location>
</feature>
<feature type="domain" description="bHLH" evidence="5">
    <location>
        <begin position="34"/>
        <end position="84"/>
    </location>
</feature>
<feature type="domain" description="PAS 1" evidence="4">
    <location>
        <begin position="107"/>
        <end position="177"/>
    </location>
</feature>
<feature type="domain" description="PAS 2" evidence="4">
    <location>
        <begin position="262"/>
        <end position="332"/>
    </location>
</feature>
<feature type="domain" description="PAC">
    <location>
        <begin position="336"/>
        <end position="379"/>
    </location>
</feature>
<feature type="region of interest" description="Interaction with NR3C1" evidence="2">
    <location>
        <begin position="371"/>
        <end position="864"/>
    </location>
</feature>
<feature type="region of interest" description="Disordered" evidence="6">
    <location>
        <begin position="420"/>
        <end position="494"/>
    </location>
</feature>
<feature type="region of interest" description="Interaction with SIRT1" evidence="2">
    <location>
        <begin position="450"/>
        <end position="570"/>
    </location>
</feature>
<feature type="region of interest" description="Implicated in the circadian rhythmicity" evidence="1">
    <location>
        <begin position="514"/>
        <end position="564"/>
    </location>
</feature>
<feature type="region of interest" description="Disordered" evidence="6">
    <location>
        <begin position="620"/>
        <end position="653"/>
    </location>
</feature>
<feature type="region of interest" description="Disordered" evidence="6">
    <location>
        <begin position="755"/>
        <end position="803"/>
    </location>
</feature>
<feature type="region of interest" description="Disordered" evidence="6">
    <location>
        <begin position="822"/>
        <end position="865"/>
    </location>
</feature>
<feature type="short sequence motif" description="Nuclear localization signal" evidence="2">
    <location>
        <begin position="32"/>
        <end position="47"/>
    </location>
</feature>
<feature type="compositionally biased region" description="Polar residues" evidence="6">
    <location>
        <begin position="447"/>
        <end position="463"/>
    </location>
</feature>
<feature type="compositionally biased region" description="Low complexity" evidence="6">
    <location>
        <begin position="478"/>
        <end position="493"/>
    </location>
</feature>
<feature type="compositionally biased region" description="Low complexity" evidence="6">
    <location>
        <begin position="755"/>
        <end position="796"/>
    </location>
</feature>
<feature type="compositionally biased region" description="Low complexity" evidence="6">
    <location>
        <begin position="828"/>
        <end position="847"/>
    </location>
</feature>
<feature type="compositionally biased region" description="Polar residues" evidence="6">
    <location>
        <begin position="856"/>
        <end position="865"/>
    </location>
</feature>
<feature type="site" description="Interaction with E-box DNA" evidence="3">
    <location>
        <position position="39"/>
    </location>
</feature>
<feature type="site" description="Interaction with E-box DNA" evidence="3">
    <location>
        <position position="43"/>
    </location>
</feature>
<feature type="site" description="Interaction with E-box DNA" evidence="3">
    <location>
        <position position="47"/>
    </location>
</feature>
<feature type="site" description="Important for interaction with BMAL1" evidence="3">
    <location>
        <position position="84"/>
    </location>
</feature>
<feature type="modified residue" description="Phosphoserine" evidence="2">
    <location>
        <position position="38"/>
    </location>
</feature>
<feature type="modified residue" description="Phosphoserine" evidence="2">
    <location>
        <position position="42"/>
    </location>
</feature>
<feature type="modified residue" description="Phosphoserine" evidence="2">
    <location>
        <position position="408"/>
    </location>
</feature>
<feature type="modified residue" description="Phosphoserine; by GSK3-beta" evidence="2">
    <location>
        <position position="427"/>
    </location>
</feature>
<feature type="modified residue" description="Phosphoserine" evidence="2">
    <location>
        <position position="431"/>
    </location>
</feature>
<feature type="modified residue" description="Phosphothreonine; by CDK5" evidence="3">
    <location>
        <position position="451"/>
    </location>
</feature>
<feature type="modified residue" description="Phosphothreonine; by CDK5" evidence="3">
    <location>
        <position position="461"/>
    </location>
</feature>
<feature type="cross-link" description="Glycyl lysine isopeptide (Lys-Gly) (interchain with G-Cter in SUMO1)" evidence="2">
    <location>
        <position position="67"/>
    </location>
</feature>
<feature type="cross-link" description="Glycyl lysine isopeptide (Lys-Gly) (interchain with G-Cter in SUMO1)" evidence="2">
    <location>
        <position position="861"/>
    </location>
</feature>
<proteinExistence type="evidence at transcript level"/>
<protein>
    <recommendedName>
        <fullName>Circadian locomoter output cycles protein kaput</fullName>
        <ecNumber>2.3.1.48</ecNumber>
    </recommendedName>
</protein>
<reference key="1">
    <citation type="journal article" date="2001" name="Proc. Natl. Acad. Sci. U.S.A.">
        <title>Biological clock in total darkness: the Clock/MOP3 circadian system of the blind subterranean mole rat.</title>
        <authorList>
            <person name="Avivi A."/>
            <person name="Albrecht U."/>
            <person name="Oster H."/>
            <person name="Joel A."/>
            <person name="Beiles A."/>
            <person name="Nevo E."/>
        </authorList>
    </citation>
    <scope>NUCLEOTIDE SEQUENCE [MRNA]</scope>
    <source>
        <tissue>Brain</tissue>
    </source>
</reference>
<name>CLOCK_SPACA</name>
<accession>Q91YB2</accession>